<comment type="function">
    <text evidence="1">Is involved in the reduction of 2,3-digeranylgeranylglycerophospholipids (unsaturated archaeols) into 2,3-diphytanylglycerophospholipids (saturated archaeols) in the biosynthesis of archaeal membrane lipids. Catalyzes the formation of archaetidic acid (2,3-di-O-phytanyl-sn-glyceryl phosphate) from 2,3-di-O-geranylgeranylglyceryl phosphate (DGGGP) via the hydrogenation of each double bond of the isoprenoid chains. Is also probably able to reduce double bonds of geranyl groups in CDP-2,3-bis-O-(geranylgeranyl)-sn-glycerol and archaetidylserine, thus acting at various stages in the biosynthesis of archaeal membrane lipids.</text>
</comment>
<comment type="catalytic activity">
    <reaction evidence="1">
        <text>a 2,3-bis-O-phytanyl-sn-glycerol 1-phospholipid + 8 oxidized 2[4Fe-4S]-[ferredoxin] = a 2,3-bis-O-(geranylgeranyl)-sn-glycerol 1-phospholipid + 8 reduced 2[4Fe-4S]-[ferredoxin] + 16 H(+)</text>
        <dbReference type="Rhea" id="RHEA:54324"/>
        <dbReference type="Rhea" id="RHEA-COMP:10002"/>
        <dbReference type="Rhea" id="RHEA-COMP:10004"/>
        <dbReference type="ChEBI" id="CHEBI:15378"/>
        <dbReference type="ChEBI" id="CHEBI:33722"/>
        <dbReference type="ChEBI" id="CHEBI:33723"/>
        <dbReference type="ChEBI" id="CHEBI:138139"/>
        <dbReference type="ChEBI" id="CHEBI:138140"/>
        <dbReference type="EC" id="1.3.7.11"/>
    </reaction>
    <physiologicalReaction direction="right-to-left" evidence="1">
        <dbReference type="Rhea" id="RHEA:54326"/>
    </physiologicalReaction>
</comment>
<comment type="catalytic activity">
    <reaction evidence="1">
        <text>2,3-bis-O-(phytanyl)-sn-glycerol 1-phosphate + 8 oxidized 2[4Fe-4S]-[ferredoxin] = 2,3-bis-O-(geranylgeranyl)-sn-glycerol 1-phosphate + 8 reduced 2[4Fe-4S]-[ferredoxin] + 16 H(+)</text>
        <dbReference type="Rhea" id="RHEA:36159"/>
        <dbReference type="Rhea" id="RHEA-COMP:10002"/>
        <dbReference type="Rhea" id="RHEA-COMP:10004"/>
        <dbReference type="ChEBI" id="CHEBI:15378"/>
        <dbReference type="ChEBI" id="CHEBI:33722"/>
        <dbReference type="ChEBI" id="CHEBI:33723"/>
        <dbReference type="ChEBI" id="CHEBI:58837"/>
        <dbReference type="ChEBI" id="CHEBI:73125"/>
        <dbReference type="EC" id="1.3.7.11"/>
    </reaction>
    <physiologicalReaction direction="right-to-left" evidence="1">
        <dbReference type="Rhea" id="RHEA:36161"/>
    </physiologicalReaction>
</comment>
<comment type="catalytic activity">
    <reaction evidence="1">
        <text>a 2,3-bis-O-phytanyl-sn-glycerol 1-phospholipid + 8 A = a 2,3-bis-O-(geranylgeranyl)-sn-glycerol 1-phospholipid + 8 AH2</text>
        <dbReference type="Rhea" id="RHEA:64376"/>
        <dbReference type="ChEBI" id="CHEBI:13193"/>
        <dbReference type="ChEBI" id="CHEBI:17499"/>
        <dbReference type="ChEBI" id="CHEBI:138139"/>
        <dbReference type="ChEBI" id="CHEBI:138140"/>
    </reaction>
    <physiologicalReaction direction="right-to-left" evidence="1">
        <dbReference type="Rhea" id="RHEA:64378"/>
    </physiologicalReaction>
</comment>
<comment type="catalytic activity">
    <reaction evidence="1">
        <text>CDP-2,3-bis-O-(geranylgeranyl)-sn-glycerol + 8 AH2 = CDP-2,3-bis-O-(phytanyl)-sn-glycerol + 8 A</text>
        <dbReference type="Rhea" id="RHEA:84207"/>
        <dbReference type="ChEBI" id="CHEBI:13193"/>
        <dbReference type="ChEBI" id="CHEBI:17499"/>
        <dbReference type="ChEBI" id="CHEBI:58838"/>
        <dbReference type="ChEBI" id="CHEBI:74004"/>
    </reaction>
    <physiologicalReaction direction="left-to-right" evidence="1">
        <dbReference type="Rhea" id="RHEA:84208"/>
    </physiologicalReaction>
</comment>
<comment type="catalytic activity">
    <reaction evidence="1">
        <text>archaetidylserine + 8 AH2 = 2,3-bis-O-phytanyl-sn-glycero-3-phospho-L-serine + 8 A</text>
        <dbReference type="Rhea" id="RHEA:84215"/>
        <dbReference type="ChEBI" id="CHEBI:13193"/>
        <dbReference type="ChEBI" id="CHEBI:17499"/>
        <dbReference type="ChEBI" id="CHEBI:71517"/>
        <dbReference type="ChEBI" id="CHEBI:74853"/>
    </reaction>
    <physiologicalReaction direction="left-to-right" evidence="1">
        <dbReference type="Rhea" id="RHEA:84216"/>
    </physiologicalReaction>
</comment>
<comment type="cofactor">
    <cofactor evidence="1">
        <name>FAD</name>
        <dbReference type="ChEBI" id="CHEBI:57692"/>
    </cofactor>
    <text evidence="1">Binds 1 FAD per subunit.</text>
</comment>
<comment type="pathway">
    <text evidence="1">Membrane lipid metabolism; glycerophospholipid metabolism.</text>
</comment>
<comment type="miscellaneous">
    <text evidence="1">Reduction reaction proceeds via syn addition of hydrogen for double bonds.</text>
</comment>
<comment type="similarity">
    <text evidence="1">Belongs to the geranylgeranyl reductase family. DGGGPL reductase subfamily.</text>
</comment>
<gene>
    <name type="ordered locus">Mbur_1308</name>
</gene>
<accession>Q12WF0</accession>
<dbReference type="EC" id="1.3.7.11" evidence="1"/>
<dbReference type="EMBL" id="CP000300">
    <property type="protein sequence ID" value="ABE52226.1"/>
    <property type="molecule type" value="Genomic_DNA"/>
</dbReference>
<dbReference type="RefSeq" id="WP_011499371.1">
    <property type="nucleotide sequence ID" value="NC_007955.1"/>
</dbReference>
<dbReference type="SMR" id="Q12WF0"/>
<dbReference type="STRING" id="259564.Mbur_1308"/>
<dbReference type="GeneID" id="3998596"/>
<dbReference type="KEGG" id="mbu:Mbur_1308"/>
<dbReference type="HOGENOM" id="CLU_024648_0_0_2"/>
<dbReference type="OrthoDB" id="6062at2157"/>
<dbReference type="UniPathway" id="UPA00940"/>
<dbReference type="Proteomes" id="UP000001979">
    <property type="component" value="Chromosome"/>
</dbReference>
<dbReference type="GO" id="GO:0016020">
    <property type="term" value="C:membrane"/>
    <property type="evidence" value="ECO:0007669"/>
    <property type="project" value="GOC"/>
</dbReference>
<dbReference type="GO" id="GO:0050660">
    <property type="term" value="F:flavin adenine dinucleotide binding"/>
    <property type="evidence" value="ECO:0007669"/>
    <property type="project" value="UniProtKB-UniRule"/>
</dbReference>
<dbReference type="GO" id="GO:0045550">
    <property type="term" value="F:geranylgeranyl reductase activity"/>
    <property type="evidence" value="ECO:0007669"/>
    <property type="project" value="InterPro"/>
</dbReference>
<dbReference type="GO" id="GO:0016636">
    <property type="term" value="F:oxidoreductase activity, acting on the CH-CH group of donors, iron-sulfur protein as acceptor"/>
    <property type="evidence" value="ECO:0007669"/>
    <property type="project" value="UniProtKB-UniRule"/>
</dbReference>
<dbReference type="GO" id="GO:0016628">
    <property type="term" value="F:oxidoreductase activity, acting on the CH-CH group of donors, NAD or NADP as acceptor"/>
    <property type="evidence" value="ECO:0007669"/>
    <property type="project" value="InterPro"/>
</dbReference>
<dbReference type="GO" id="GO:0046474">
    <property type="term" value="P:glycerophospholipid biosynthetic process"/>
    <property type="evidence" value="ECO:0007669"/>
    <property type="project" value="UniProtKB-UniRule"/>
</dbReference>
<dbReference type="GO" id="GO:0046467">
    <property type="term" value="P:membrane lipid biosynthetic process"/>
    <property type="evidence" value="ECO:0007669"/>
    <property type="project" value="InterPro"/>
</dbReference>
<dbReference type="Gene3D" id="3.30.9.10">
    <property type="entry name" value="D-Amino Acid Oxidase, subunit A, domain 2"/>
    <property type="match status" value="1"/>
</dbReference>
<dbReference type="Gene3D" id="3.50.50.60">
    <property type="entry name" value="FAD/NAD(P)-binding domain"/>
    <property type="match status" value="1"/>
</dbReference>
<dbReference type="HAMAP" id="MF_01287">
    <property type="entry name" value="DGGGPL_reductase"/>
    <property type="match status" value="1"/>
</dbReference>
<dbReference type="InterPro" id="IPR023590">
    <property type="entry name" value="DGGGPL_reductase"/>
</dbReference>
<dbReference type="InterPro" id="IPR036188">
    <property type="entry name" value="FAD/NAD-bd_sf"/>
</dbReference>
<dbReference type="InterPro" id="IPR011777">
    <property type="entry name" value="Geranylgeranyl_Rdtase_fam"/>
</dbReference>
<dbReference type="InterPro" id="IPR050407">
    <property type="entry name" value="Geranylgeranyl_reductase"/>
</dbReference>
<dbReference type="InterPro" id="IPR054715">
    <property type="entry name" value="GGR_cat"/>
</dbReference>
<dbReference type="NCBIfam" id="TIGR02032">
    <property type="entry name" value="GG-red-SF"/>
    <property type="match status" value="1"/>
</dbReference>
<dbReference type="PANTHER" id="PTHR42685:SF18">
    <property type="entry name" value="DIGERANYLGERANYLGLYCEROPHOSPHOLIPID REDUCTASE"/>
    <property type="match status" value="1"/>
</dbReference>
<dbReference type="PANTHER" id="PTHR42685">
    <property type="entry name" value="GERANYLGERANYL DIPHOSPHATE REDUCTASE"/>
    <property type="match status" value="1"/>
</dbReference>
<dbReference type="Pfam" id="PF12831">
    <property type="entry name" value="FAD_oxidored"/>
    <property type="match status" value="1"/>
</dbReference>
<dbReference type="Pfam" id="PF22578">
    <property type="entry name" value="GGR_cat"/>
    <property type="match status" value="1"/>
</dbReference>
<dbReference type="PRINTS" id="PR00420">
    <property type="entry name" value="RNGMNOXGNASE"/>
</dbReference>
<dbReference type="SUPFAM" id="SSF51905">
    <property type="entry name" value="FAD/NAD(P)-binding domain"/>
    <property type="match status" value="1"/>
</dbReference>
<organism>
    <name type="scientific">Methanococcoides burtonii (strain DSM 6242 / NBRC 107633 / OCM 468 / ACE-M)</name>
    <dbReference type="NCBI Taxonomy" id="259564"/>
    <lineage>
        <taxon>Archaea</taxon>
        <taxon>Methanobacteriati</taxon>
        <taxon>Methanobacteriota</taxon>
        <taxon>Stenosarchaea group</taxon>
        <taxon>Methanomicrobia</taxon>
        <taxon>Methanosarcinales</taxon>
        <taxon>Methanosarcinaceae</taxon>
        <taxon>Methanococcoides</taxon>
    </lineage>
</organism>
<feature type="chain" id="PRO_0000351456" description="Digeranylgeranylglycerophospholipid reductase 2">
    <location>
        <begin position="1"/>
        <end position="406"/>
    </location>
</feature>
<feature type="binding site" evidence="1">
    <location>
        <position position="15"/>
    </location>
    <ligand>
        <name>FAD</name>
        <dbReference type="ChEBI" id="CHEBI:57692"/>
    </ligand>
</feature>
<feature type="binding site" evidence="1">
    <location>
        <position position="34"/>
    </location>
    <ligand>
        <name>FAD</name>
        <dbReference type="ChEBI" id="CHEBI:57692"/>
    </ligand>
</feature>
<feature type="binding site" evidence="1">
    <location>
        <position position="45"/>
    </location>
    <ligand>
        <name>FAD</name>
        <dbReference type="ChEBI" id="CHEBI:57692"/>
    </ligand>
</feature>
<feature type="binding site" evidence="1">
    <location>
        <position position="46"/>
    </location>
    <ligand>
        <name>FAD</name>
        <dbReference type="ChEBI" id="CHEBI:57692"/>
    </ligand>
</feature>
<feature type="binding site" evidence="1">
    <location>
        <position position="48"/>
    </location>
    <ligand>
        <name>FAD</name>
        <dbReference type="ChEBI" id="CHEBI:57692"/>
    </ligand>
</feature>
<feature type="binding site" evidence="1">
    <location>
        <position position="99"/>
    </location>
    <ligand>
        <name>FAD</name>
        <dbReference type="ChEBI" id="CHEBI:57692"/>
    </ligand>
</feature>
<feature type="binding site" evidence="1">
    <location>
        <position position="123"/>
    </location>
    <ligand>
        <name>FAD</name>
        <dbReference type="ChEBI" id="CHEBI:57692"/>
    </ligand>
</feature>
<feature type="binding site" evidence="1">
    <location>
        <position position="279"/>
    </location>
    <ligand>
        <name>FAD</name>
        <dbReference type="ChEBI" id="CHEBI:57692"/>
    </ligand>
</feature>
<feature type="binding site" evidence="1">
    <location>
        <position position="291"/>
    </location>
    <ligand>
        <name>FAD</name>
        <dbReference type="ChEBI" id="CHEBI:57692"/>
    </ligand>
</feature>
<feature type="binding site" evidence="1">
    <location>
        <position position="292"/>
    </location>
    <ligand>
        <name>FAD</name>
        <dbReference type="ChEBI" id="CHEBI:57692"/>
    </ligand>
</feature>
<keyword id="KW-0274">FAD</keyword>
<keyword id="KW-0285">Flavoprotein</keyword>
<keyword id="KW-0444">Lipid biosynthesis</keyword>
<keyword id="KW-0443">Lipid metabolism</keyword>
<keyword id="KW-0560">Oxidoreductase</keyword>
<keyword id="KW-0594">Phospholipid biosynthesis</keyword>
<keyword id="KW-1208">Phospholipid metabolism</keyword>
<name>GGR2_METBU</name>
<proteinExistence type="inferred from homology"/>
<sequence>MKDHYDVIVVGAGPGGSIAAKTAAKEGLDVLMIEKRQEIGDPIRCAEGVGKFHLKQHIEPDPRWICADVKGSYIISPDGTRIEMAEEMSGGEVGYVLERKIFDRALANESALAGAEVRVKTRATDLIIENDTVCGIKLMHLGKEYEVRSKIVIGADGVESKVGRWAGIETSVKPSDIETCAQYLVSNANIDQEFCYFYLGNEIAPAGYVWMFPKGGNKANVGIGILGSRAGKDKPIELLNDFIEKNMPDAKIIEMVIGGVPVCGTIERTIANGLMLVGDAARQSDPITGGGIINAMDAGKIAGEIAAKAIRKGDCSIDTLQEYEDLWRATIGKEINNSLIVKDTFINFTDEDLNSLAYSLRDINFTSMSLINLLKALFKANKKLLWDLRGIFKDVIKGEIDFKYKA</sequence>
<reference key="1">
    <citation type="journal article" date="2009" name="ISME J.">
        <title>The genome sequence of the psychrophilic archaeon, Methanococcoides burtonii: the role of genome evolution in cold adaptation.</title>
        <authorList>
            <person name="Allen M.A."/>
            <person name="Lauro F.M."/>
            <person name="Williams T.J."/>
            <person name="Burg D."/>
            <person name="Siddiqui K.S."/>
            <person name="De Francisci D."/>
            <person name="Chong K.W."/>
            <person name="Pilak O."/>
            <person name="Chew H.H."/>
            <person name="De Maere M.Z."/>
            <person name="Ting L."/>
            <person name="Katrib M."/>
            <person name="Ng C."/>
            <person name="Sowers K.R."/>
            <person name="Galperin M.Y."/>
            <person name="Anderson I.J."/>
            <person name="Ivanova N."/>
            <person name="Dalin E."/>
            <person name="Martinez M."/>
            <person name="Lapidus A."/>
            <person name="Hauser L."/>
            <person name="Land M."/>
            <person name="Thomas T."/>
            <person name="Cavicchioli R."/>
        </authorList>
    </citation>
    <scope>NUCLEOTIDE SEQUENCE [LARGE SCALE GENOMIC DNA]</scope>
    <source>
        <strain>DSM 6242 / NBRC 107633 / OCM 468 / ACE-M</strain>
    </source>
</reference>
<protein>
    <recommendedName>
        <fullName evidence="1">Digeranylgeranylglycerophospholipid reductase 2</fullName>
        <shortName evidence="1">DGGGPL reductase 2</shortName>
        <ecNumber evidence="1">1.3.7.11</ecNumber>
    </recommendedName>
    <alternativeName>
        <fullName evidence="1">2,3-bis-O-geranylgeranylglyceryl phosphate reductase 2</fullName>
    </alternativeName>
    <alternativeName>
        <fullName evidence="1">Geranylgeranyl reductase 2</fullName>
        <shortName evidence="1">GGR 2</shortName>
    </alternativeName>
</protein>
<evidence type="ECO:0000255" key="1">
    <source>
        <dbReference type="HAMAP-Rule" id="MF_01287"/>
    </source>
</evidence>